<comment type="function">
    <text evidence="4">Transcription factor that specifically regulates the neosartoricin B biosynthesis gene cluster (PubMed:23758576).</text>
</comment>
<comment type="subcellular location">
    <subcellularLocation>
        <location evidence="1">Nucleus</location>
    </subcellularLocation>
</comment>
<protein>
    <recommendedName>
        <fullName evidence="3">C6 finger domain transcription factor nscR</fullName>
    </recommendedName>
    <alternativeName>
        <fullName evidence="3">Neosartiricin B biosynthesis protein R</fullName>
    </alternativeName>
</protein>
<feature type="chain" id="PRO_0000437931" description="C6 finger domain transcription factor nscR">
    <location>
        <begin position="1"/>
        <end position="693"/>
    </location>
</feature>
<feature type="DNA-binding region" description="Zn(2)-C6 fungal-type" evidence="1">
    <location>
        <begin position="17"/>
        <end position="43"/>
    </location>
</feature>
<feature type="region of interest" description="Disordered" evidence="2">
    <location>
        <begin position="589"/>
        <end position="608"/>
    </location>
</feature>
<accession>F2T0M4</accession>
<keyword id="KW-0238">DNA-binding</keyword>
<keyword id="KW-0479">Metal-binding</keyword>
<keyword id="KW-0539">Nucleus</keyword>
<keyword id="KW-1185">Reference proteome</keyword>
<keyword id="KW-0804">Transcription</keyword>
<keyword id="KW-0805">Transcription regulation</keyword>
<keyword id="KW-0862">Zinc</keyword>
<gene>
    <name evidence="3" type="primary">nscR</name>
    <name type="ORF">TERG_08361</name>
</gene>
<evidence type="ECO:0000255" key="1">
    <source>
        <dbReference type="PROSITE-ProRule" id="PRU00227"/>
    </source>
</evidence>
<evidence type="ECO:0000256" key="2">
    <source>
        <dbReference type="SAM" id="MobiDB-lite"/>
    </source>
</evidence>
<evidence type="ECO:0000303" key="3">
    <source>
    </source>
</evidence>
<evidence type="ECO:0000305" key="4">
    <source>
    </source>
</evidence>
<dbReference type="EMBL" id="GG700661">
    <property type="protein sequence ID" value="EGD92146.1"/>
    <property type="molecule type" value="Genomic_DNA"/>
</dbReference>
<dbReference type="RefSeq" id="XP_003231063.1">
    <property type="nucleotide sequence ID" value="XM_003231015.1"/>
</dbReference>
<dbReference type="STRING" id="559305.F2T0M4"/>
<dbReference type="GeneID" id="10377337"/>
<dbReference type="VEuPathDB" id="FungiDB:TERG_08361"/>
<dbReference type="eggNOG" id="ENOG502SHJA">
    <property type="taxonomic scope" value="Eukaryota"/>
</dbReference>
<dbReference type="HOGENOM" id="CLU_004083_7_1_1"/>
<dbReference type="InParanoid" id="F2T0M4"/>
<dbReference type="OMA" id="LMHTDPR"/>
<dbReference type="OrthoDB" id="435881at2759"/>
<dbReference type="Proteomes" id="UP000008864">
    <property type="component" value="Unassembled WGS sequence"/>
</dbReference>
<dbReference type="GO" id="GO:0005634">
    <property type="term" value="C:nucleus"/>
    <property type="evidence" value="ECO:0007669"/>
    <property type="project" value="UniProtKB-SubCell"/>
</dbReference>
<dbReference type="GO" id="GO:0003677">
    <property type="term" value="F:DNA binding"/>
    <property type="evidence" value="ECO:0007669"/>
    <property type="project" value="UniProtKB-KW"/>
</dbReference>
<dbReference type="GO" id="GO:0000981">
    <property type="term" value="F:DNA-binding transcription factor activity, RNA polymerase II-specific"/>
    <property type="evidence" value="ECO:0007669"/>
    <property type="project" value="InterPro"/>
</dbReference>
<dbReference type="GO" id="GO:0008270">
    <property type="term" value="F:zinc ion binding"/>
    <property type="evidence" value="ECO:0007669"/>
    <property type="project" value="InterPro"/>
</dbReference>
<dbReference type="GO" id="GO:0006351">
    <property type="term" value="P:DNA-templated transcription"/>
    <property type="evidence" value="ECO:0007669"/>
    <property type="project" value="InterPro"/>
</dbReference>
<dbReference type="CDD" id="cd12148">
    <property type="entry name" value="fungal_TF_MHR"/>
    <property type="match status" value="1"/>
</dbReference>
<dbReference type="CDD" id="cd00067">
    <property type="entry name" value="GAL4"/>
    <property type="match status" value="1"/>
</dbReference>
<dbReference type="Gene3D" id="4.10.240.10">
    <property type="entry name" value="Zn(2)-C6 fungal-type DNA-binding domain"/>
    <property type="match status" value="1"/>
</dbReference>
<dbReference type="InterPro" id="IPR050613">
    <property type="entry name" value="Sec_Metabolite_Reg"/>
</dbReference>
<dbReference type="InterPro" id="IPR007219">
    <property type="entry name" value="Transcription_factor_dom_fun"/>
</dbReference>
<dbReference type="InterPro" id="IPR036864">
    <property type="entry name" value="Zn2-C6_fun-type_DNA-bd_sf"/>
</dbReference>
<dbReference type="InterPro" id="IPR001138">
    <property type="entry name" value="Zn2Cys6_DnaBD"/>
</dbReference>
<dbReference type="PANTHER" id="PTHR31001">
    <property type="entry name" value="UNCHARACTERIZED TRANSCRIPTIONAL REGULATORY PROTEIN"/>
    <property type="match status" value="1"/>
</dbReference>
<dbReference type="PANTHER" id="PTHR31001:SF50">
    <property type="entry name" value="ZN(II)2CYS6 TRANSCRIPTION FACTOR (EUROFUNG)"/>
    <property type="match status" value="1"/>
</dbReference>
<dbReference type="Pfam" id="PF04082">
    <property type="entry name" value="Fungal_trans"/>
    <property type="match status" value="1"/>
</dbReference>
<dbReference type="Pfam" id="PF00172">
    <property type="entry name" value="Zn_clus"/>
    <property type="match status" value="1"/>
</dbReference>
<dbReference type="SMART" id="SM00066">
    <property type="entry name" value="GAL4"/>
    <property type="match status" value="1"/>
</dbReference>
<dbReference type="SUPFAM" id="SSF57701">
    <property type="entry name" value="Zn2/Cys6 DNA-binding domain"/>
    <property type="match status" value="1"/>
</dbReference>
<dbReference type="PROSITE" id="PS00463">
    <property type="entry name" value="ZN2_CY6_FUNGAL_1"/>
    <property type="match status" value="1"/>
</dbReference>
<dbReference type="PROSITE" id="PS50048">
    <property type="entry name" value="ZN2_CY6_FUNGAL_2"/>
    <property type="match status" value="1"/>
</dbReference>
<organism>
    <name type="scientific">Trichophyton rubrum (strain ATCC MYA-4607 / CBS 118892)</name>
    <name type="common">Athlete's foot fungus</name>
    <dbReference type="NCBI Taxonomy" id="559305"/>
    <lineage>
        <taxon>Eukaryota</taxon>
        <taxon>Fungi</taxon>
        <taxon>Dikarya</taxon>
        <taxon>Ascomycota</taxon>
        <taxon>Pezizomycotina</taxon>
        <taxon>Eurotiomycetes</taxon>
        <taxon>Eurotiomycetidae</taxon>
        <taxon>Onygenales</taxon>
        <taxon>Arthrodermataceae</taxon>
        <taxon>Trichophyton</taxon>
    </lineage>
</organism>
<sequence length="693" mass="77132">MEKRGPKRRQQAAHLSCELCRERKVKCDKLDPCTNCSSAGVICVPVRRPRLPRGAHAQRLRRISPEDPEAPIQIDIASPPDTGTIAEDDLKERIRRLEALVDSMRSSNHISKQNQEAQDTIESTLNGIDDDSLLIKGPRVHPSDGGLRILGLSGSSSPETGWASIIEDRDISMQLCQVYLLNVDPVIKILHRPSLEKWMLQGQRYLGFPERHAAVESLGAAICYVAATSLTETQSWARFHTTKSSIVARARRTCETTLEKSSPLLSPEVTTLQAFLLYLVARRSEDPSRAVWTLMAFAVRIAKALDLPRGTDDNFFGQQMRKRLWLAICLLDFQTSLSQPSEPLITVAEATSSFSPPKHINDSDFEPTTSHDIPDREGLTDTTFSLVSYHVQAAGRLLNFEPSVKDNGSRQQHVQHFEQRTLRLLFYCDPESTPYAWFTWHRIQCFVSGARLSAIRPLIYQHGDHPIPIPDTNEGTSILSLALNILEKVQLVHTDPRGEGFRWFVTVPWQPLAIAISECYICQDRALVQRAWPIVEAAFQQHEADVSGSSKAISTTLERLMCRVRGKLLQSLGASTKITTSPTFGTTNAANTLSVPHTPPSRSSITSSGDLLSNWSWTTAELSRPGEDPALLTEALISTSPQKIDPLLFSLDSQLLIAGQEQLVEADQSWAAWEEVIASLHDDETGRADMFLS</sequence>
<proteinExistence type="inferred from homology"/>
<reference key="1">
    <citation type="journal article" date="2012" name="MBio">
        <title>Comparative genome analysis of Trichophyton rubrum and related dermatophytes reveals candidate genes involved in infection.</title>
        <authorList>
            <person name="Martinez D.A."/>
            <person name="Oliver B.G."/>
            <person name="Graeser Y."/>
            <person name="Goldberg J.M."/>
            <person name="Li W."/>
            <person name="Martinez-Rossi N.M."/>
            <person name="Monod M."/>
            <person name="Shelest E."/>
            <person name="Barton R.C."/>
            <person name="Birch E."/>
            <person name="Brakhage A.A."/>
            <person name="Chen Z."/>
            <person name="Gurr S.J."/>
            <person name="Heiman D."/>
            <person name="Heitman J."/>
            <person name="Kosti I."/>
            <person name="Rossi A."/>
            <person name="Saif S."/>
            <person name="Samalova M."/>
            <person name="Saunders C.W."/>
            <person name="Shea T."/>
            <person name="Summerbell R.C."/>
            <person name="Xu J."/>
            <person name="Young S."/>
            <person name="Zeng Q."/>
            <person name="Birren B.W."/>
            <person name="Cuomo C.A."/>
            <person name="White T.C."/>
        </authorList>
    </citation>
    <scope>NUCLEOTIDE SEQUENCE [LARGE SCALE GENOMIC DNA]</scope>
    <source>
        <strain>ATCC MYA-4607 / CBS 118892</strain>
    </source>
</reference>
<reference key="2">
    <citation type="journal article" date="2013" name="ACS Synth. Biol.">
        <title>Discovery of cryptic polyketide metabolites from dermatophytes using heterologous expression in Aspergillus nidulans.</title>
        <authorList>
            <person name="Yin W.B."/>
            <person name="Chooi Y.H."/>
            <person name="Smith A.R."/>
            <person name="Cacho R.A."/>
            <person name="Hu Y."/>
            <person name="White T.C."/>
            <person name="Tang Y."/>
        </authorList>
    </citation>
    <scope>FUNCTION</scope>
</reference>
<name>NSCR_TRIRC</name>